<keyword id="KW-0067">ATP-binding</keyword>
<keyword id="KW-0418">Kinase</keyword>
<keyword id="KW-0547">Nucleotide-binding</keyword>
<keyword id="KW-0723">Serine/threonine-protein kinase</keyword>
<keyword id="KW-0749">Sporulation</keyword>
<keyword id="KW-0808">Transferase</keyword>
<feature type="chain" id="PRO_0000203552" description="Anti-sigma F factor">
    <location>
        <begin position="1"/>
        <end position="146"/>
    </location>
</feature>
<evidence type="ECO:0000255" key="1">
    <source>
        <dbReference type="HAMAP-Rule" id="MF_00637"/>
    </source>
</evidence>
<sequence length="146" mass="16246">MRNEMNLQFSALSQNESFARVTVAAFIAQLDPTMEELTEIKTVVSEAVTNAIIHGYEGNAEGVVYISVILEEAMVKLTIRDEGIGIFNLDEARQPLFTTKPELERSGMGFTIMENFMDEVEVISNESFGTTIHLTKYLSNSNALCN</sequence>
<comment type="function">
    <text evidence="1">Binds to sigma F and blocks its ability to form an RNA polymerase holoenzyme (E-sigma F). Phosphorylates SpoIIAA on a serine residue. This phosphorylation may enable SpoIIAA to act as an anti-anti-sigma factor that counteracts SpoIIAB and thus releases sigma F from inhibition.</text>
</comment>
<comment type="catalytic activity">
    <reaction evidence="1">
        <text>L-seryl-[protein] + ATP = O-phospho-L-seryl-[protein] + ADP + H(+)</text>
        <dbReference type="Rhea" id="RHEA:17989"/>
        <dbReference type="Rhea" id="RHEA-COMP:9863"/>
        <dbReference type="Rhea" id="RHEA-COMP:11604"/>
        <dbReference type="ChEBI" id="CHEBI:15378"/>
        <dbReference type="ChEBI" id="CHEBI:29999"/>
        <dbReference type="ChEBI" id="CHEBI:30616"/>
        <dbReference type="ChEBI" id="CHEBI:83421"/>
        <dbReference type="ChEBI" id="CHEBI:456216"/>
        <dbReference type="EC" id="2.7.11.1"/>
    </reaction>
</comment>
<comment type="catalytic activity">
    <reaction evidence="1">
        <text>L-threonyl-[protein] + ATP = O-phospho-L-threonyl-[protein] + ADP + H(+)</text>
        <dbReference type="Rhea" id="RHEA:46608"/>
        <dbReference type="Rhea" id="RHEA-COMP:11060"/>
        <dbReference type="Rhea" id="RHEA-COMP:11605"/>
        <dbReference type="ChEBI" id="CHEBI:15378"/>
        <dbReference type="ChEBI" id="CHEBI:30013"/>
        <dbReference type="ChEBI" id="CHEBI:30616"/>
        <dbReference type="ChEBI" id="CHEBI:61977"/>
        <dbReference type="ChEBI" id="CHEBI:456216"/>
        <dbReference type="EC" id="2.7.11.1"/>
    </reaction>
</comment>
<comment type="similarity">
    <text evidence="1">Belongs to the anti-sigma-factor family.</text>
</comment>
<dbReference type="EC" id="2.7.11.1" evidence="1"/>
<dbReference type="EMBL" id="CP000001">
    <property type="protein sequence ID" value="AAU16438.1"/>
    <property type="molecule type" value="Genomic_DNA"/>
</dbReference>
<dbReference type="RefSeq" id="WP_001243400.1">
    <property type="nucleotide sequence ID" value="NZ_CP009968.1"/>
</dbReference>
<dbReference type="SMR" id="Q635K7"/>
<dbReference type="GeneID" id="92883500"/>
<dbReference type="KEGG" id="bcz:BCE33L3830"/>
<dbReference type="PATRIC" id="fig|288681.22.peg.1571"/>
<dbReference type="Proteomes" id="UP000002612">
    <property type="component" value="Chromosome"/>
</dbReference>
<dbReference type="GO" id="GO:0005524">
    <property type="term" value="F:ATP binding"/>
    <property type="evidence" value="ECO:0007669"/>
    <property type="project" value="UniProtKB-KW"/>
</dbReference>
<dbReference type="GO" id="GO:0106310">
    <property type="term" value="F:protein serine kinase activity"/>
    <property type="evidence" value="ECO:0007669"/>
    <property type="project" value="RHEA"/>
</dbReference>
<dbReference type="GO" id="GO:0004674">
    <property type="term" value="F:protein serine/threonine kinase activity"/>
    <property type="evidence" value="ECO:0007669"/>
    <property type="project" value="UniProtKB-KW"/>
</dbReference>
<dbReference type="GO" id="GO:0016989">
    <property type="term" value="F:sigma factor antagonist activity"/>
    <property type="evidence" value="ECO:0007669"/>
    <property type="project" value="InterPro"/>
</dbReference>
<dbReference type="GO" id="GO:0030436">
    <property type="term" value="P:asexual sporulation"/>
    <property type="evidence" value="ECO:0007669"/>
    <property type="project" value="UniProtKB-UniRule"/>
</dbReference>
<dbReference type="GO" id="GO:0042174">
    <property type="term" value="P:negative regulation of sporulation resulting in formation of a cellular spore"/>
    <property type="evidence" value="ECO:0007669"/>
    <property type="project" value="InterPro"/>
</dbReference>
<dbReference type="GO" id="GO:0030435">
    <property type="term" value="P:sporulation resulting in formation of a cellular spore"/>
    <property type="evidence" value="ECO:0007669"/>
    <property type="project" value="UniProtKB-KW"/>
</dbReference>
<dbReference type="FunFam" id="3.30.565.10:FF:000022">
    <property type="entry name" value="Anti-sigma F factor"/>
    <property type="match status" value="1"/>
</dbReference>
<dbReference type="Gene3D" id="3.30.565.10">
    <property type="entry name" value="Histidine kinase-like ATPase, C-terminal domain"/>
    <property type="match status" value="1"/>
</dbReference>
<dbReference type="HAMAP" id="MF_00637">
    <property type="entry name" value="Anti_sigma_F"/>
    <property type="match status" value="1"/>
</dbReference>
<dbReference type="InterPro" id="IPR050267">
    <property type="entry name" value="Anti-sigma-factor_SerPK"/>
</dbReference>
<dbReference type="InterPro" id="IPR010194">
    <property type="entry name" value="Anti-sigma_F"/>
</dbReference>
<dbReference type="InterPro" id="IPR036890">
    <property type="entry name" value="HATPase_C_sf"/>
</dbReference>
<dbReference type="NCBIfam" id="TIGR01925">
    <property type="entry name" value="spIIAB"/>
    <property type="match status" value="1"/>
</dbReference>
<dbReference type="PANTHER" id="PTHR35526:SF3">
    <property type="entry name" value="ANTI-SIGMA-F FACTOR RSBW"/>
    <property type="match status" value="1"/>
</dbReference>
<dbReference type="PANTHER" id="PTHR35526">
    <property type="entry name" value="ANTI-SIGMA-F FACTOR RSBW-RELATED"/>
    <property type="match status" value="1"/>
</dbReference>
<dbReference type="Pfam" id="PF13581">
    <property type="entry name" value="HATPase_c_2"/>
    <property type="match status" value="1"/>
</dbReference>
<dbReference type="SMART" id="SM00387">
    <property type="entry name" value="HATPase_c"/>
    <property type="match status" value="1"/>
</dbReference>
<dbReference type="SUPFAM" id="SSF55874">
    <property type="entry name" value="ATPase domain of HSP90 chaperone/DNA topoisomerase II/histidine kinase"/>
    <property type="match status" value="1"/>
</dbReference>
<organism>
    <name type="scientific">Bacillus cereus (strain ZK / E33L)</name>
    <dbReference type="NCBI Taxonomy" id="288681"/>
    <lineage>
        <taxon>Bacteria</taxon>
        <taxon>Bacillati</taxon>
        <taxon>Bacillota</taxon>
        <taxon>Bacilli</taxon>
        <taxon>Bacillales</taxon>
        <taxon>Bacillaceae</taxon>
        <taxon>Bacillus</taxon>
        <taxon>Bacillus cereus group</taxon>
    </lineage>
</organism>
<reference key="1">
    <citation type="journal article" date="2006" name="J. Bacteriol.">
        <title>Pathogenomic sequence analysis of Bacillus cereus and Bacillus thuringiensis isolates closely related to Bacillus anthracis.</title>
        <authorList>
            <person name="Han C.S."/>
            <person name="Xie G."/>
            <person name="Challacombe J.F."/>
            <person name="Altherr M.R."/>
            <person name="Bhotika S.S."/>
            <person name="Bruce D."/>
            <person name="Campbell C.S."/>
            <person name="Campbell M.L."/>
            <person name="Chen J."/>
            <person name="Chertkov O."/>
            <person name="Cleland C."/>
            <person name="Dimitrijevic M."/>
            <person name="Doggett N.A."/>
            <person name="Fawcett J.J."/>
            <person name="Glavina T."/>
            <person name="Goodwin L.A."/>
            <person name="Hill K.K."/>
            <person name="Hitchcock P."/>
            <person name="Jackson P.J."/>
            <person name="Keim P."/>
            <person name="Kewalramani A.R."/>
            <person name="Longmire J."/>
            <person name="Lucas S."/>
            <person name="Malfatti S."/>
            <person name="McMurry K."/>
            <person name="Meincke L.J."/>
            <person name="Misra M."/>
            <person name="Moseman B.L."/>
            <person name="Mundt M."/>
            <person name="Munk A.C."/>
            <person name="Okinaka R.T."/>
            <person name="Parson-Quintana B."/>
            <person name="Reilly L.P."/>
            <person name="Richardson P."/>
            <person name="Robinson D.L."/>
            <person name="Rubin E."/>
            <person name="Saunders E."/>
            <person name="Tapia R."/>
            <person name="Tesmer J.G."/>
            <person name="Thayer N."/>
            <person name="Thompson L.S."/>
            <person name="Tice H."/>
            <person name="Ticknor L.O."/>
            <person name="Wills P.L."/>
            <person name="Brettin T.S."/>
            <person name="Gilna P."/>
        </authorList>
    </citation>
    <scope>NUCLEOTIDE SEQUENCE [LARGE SCALE GENOMIC DNA]</scope>
    <source>
        <strain>ZK / E33L</strain>
    </source>
</reference>
<accession>Q635K7</accession>
<proteinExistence type="inferred from homology"/>
<protein>
    <recommendedName>
        <fullName evidence="1">Anti-sigma F factor</fullName>
        <ecNumber evidence="1">2.7.11.1</ecNumber>
    </recommendedName>
    <alternativeName>
        <fullName evidence="1">Stage II sporulation protein AB</fullName>
    </alternativeName>
</protein>
<name>SP2AB_BACCZ</name>
<gene>
    <name evidence="1" type="primary">spoIIAB</name>
    <name type="ordered locus">BCE33L3830</name>
</gene>